<name>DBH_CHLMU</name>
<proteinExistence type="inferred from homology"/>
<protein>
    <recommendedName>
        <fullName>Probable DNA-binding protein HU</fullName>
    </recommendedName>
</protein>
<dbReference type="EMBL" id="AE002160">
    <property type="protein sequence ID" value="AAF39378.1"/>
    <property type="molecule type" value="Genomic_DNA"/>
</dbReference>
<dbReference type="PIR" id="F81691">
    <property type="entry name" value="F81691"/>
</dbReference>
<dbReference type="RefSeq" id="WP_009871614.1">
    <property type="nucleotide sequence ID" value="NZ_CP063055.1"/>
</dbReference>
<dbReference type="SMR" id="P64387"/>
<dbReference type="KEGG" id="cmu:TC_0538"/>
<dbReference type="eggNOG" id="COG0776">
    <property type="taxonomic scope" value="Bacteria"/>
</dbReference>
<dbReference type="HOGENOM" id="CLU_105066_2_3_0"/>
<dbReference type="OrthoDB" id="9799835at2"/>
<dbReference type="Proteomes" id="UP000000800">
    <property type="component" value="Chromosome"/>
</dbReference>
<dbReference type="GO" id="GO:0005829">
    <property type="term" value="C:cytosol"/>
    <property type="evidence" value="ECO:0007669"/>
    <property type="project" value="TreeGrafter"/>
</dbReference>
<dbReference type="GO" id="GO:0003677">
    <property type="term" value="F:DNA binding"/>
    <property type="evidence" value="ECO:0007669"/>
    <property type="project" value="UniProtKB-KW"/>
</dbReference>
<dbReference type="GO" id="GO:0030527">
    <property type="term" value="F:structural constituent of chromatin"/>
    <property type="evidence" value="ECO:0007669"/>
    <property type="project" value="InterPro"/>
</dbReference>
<dbReference type="GO" id="GO:0030261">
    <property type="term" value="P:chromosome condensation"/>
    <property type="evidence" value="ECO:0007669"/>
    <property type="project" value="UniProtKB-KW"/>
</dbReference>
<dbReference type="CDD" id="cd13836">
    <property type="entry name" value="IHF_B"/>
    <property type="match status" value="1"/>
</dbReference>
<dbReference type="FunFam" id="4.10.520.10:FF:000017">
    <property type="entry name" value="Integration host factor alpha-subunit"/>
    <property type="match status" value="1"/>
</dbReference>
<dbReference type="Gene3D" id="4.10.520.10">
    <property type="entry name" value="IHF-like DNA-binding proteins"/>
    <property type="match status" value="1"/>
</dbReference>
<dbReference type="InterPro" id="IPR000119">
    <property type="entry name" value="Hist_DNA-bd"/>
</dbReference>
<dbReference type="InterPro" id="IPR010992">
    <property type="entry name" value="IHF-like_DNA-bd_dom_sf"/>
</dbReference>
<dbReference type="PANTHER" id="PTHR33175">
    <property type="entry name" value="DNA-BINDING PROTEIN HU"/>
    <property type="match status" value="1"/>
</dbReference>
<dbReference type="PANTHER" id="PTHR33175:SF2">
    <property type="entry name" value="INTEGRATION HOST FACTOR SUBUNIT ALPHA"/>
    <property type="match status" value="1"/>
</dbReference>
<dbReference type="Pfam" id="PF00216">
    <property type="entry name" value="Bac_DNA_binding"/>
    <property type="match status" value="1"/>
</dbReference>
<dbReference type="SMART" id="SM00411">
    <property type="entry name" value="BHL"/>
    <property type="match status" value="1"/>
</dbReference>
<dbReference type="SUPFAM" id="SSF47729">
    <property type="entry name" value="IHF-like DNA-binding proteins"/>
    <property type="match status" value="1"/>
</dbReference>
<comment type="function">
    <text evidence="1">Histone-like DNA-binding protein which is capable of wrapping DNA to stabilize it, and thus to prevent its denaturation under extreme environmental conditions.</text>
</comment>
<comment type="similarity">
    <text evidence="2">Belongs to the bacterial histone-like protein family.</text>
</comment>
<sequence length="100" mass="11410">MATMTKKKLISTISQDHKIHPNHVRTVIQNFLDKMTDALVQGDRLEFRDFGVLQVVERKPKVGRNPKNAAVPIHIPARRAVKFTPGKRMKRLIETPTKSS</sequence>
<keyword id="KW-0226">DNA condensation</keyword>
<keyword id="KW-0238">DNA-binding</keyword>
<evidence type="ECO:0000250" key="1"/>
<evidence type="ECO:0000305" key="2"/>
<reference key="1">
    <citation type="journal article" date="2000" name="Nucleic Acids Res.">
        <title>Genome sequences of Chlamydia trachomatis MoPn and Chlamydia pneumoniae AR39.</title>
        <authorList>
            <person name="Read T.D."/>
            <person name="Brunham R.C."/>
            <person name="Shen C."/>
            <person name="Gill S.R."/>
            <person name="Heidelberg J.F."/>
            <person name="White O."/>
            <person name="Hickey E.K."/>
            <person name="Peterson J.D."/>
            <person name="Utterback T.R."/>
            <person name="Berry K.J."/>
            <person name="Bass S."/>
            <person name="Linher K.D."/>
            <person name="Weidman J.F."/>
            <person name="Khouri H.M."/>
            <person name="Craven B."/>
            <person name="Bowman C."/>
            <person name="Dodson R.J."/>
            <person name="Gwinn M.L."/>
            <person name="Nelson W.C."/>
            <person name="DeBoy R.T."/>
            <person name="Kolonay J.F."/>
            <person name="McClarty G."/>
            <person name="Salzberg S.L."/>
            <person name="Eisen J.A."/>
            <person name="Fraser C.M."/>
        </authorList>
    </citation>
    <scope>NUCLEOTIDE SEQUENCE [LARGE SCALE GENOMIC DNA]</scope>
    <source>
        <strain>MoPn / Nigg</strain>
    </source>
</reference>
<gene>
    <name type="primary">hup</name>
    <name type="ordered locus">TC_0538</name>
</gene>
<accession>P64387</accession>
<accession>O84269</accession>
<feature type="chain" id="PRO_0000104932" description="Probable DNA-binding protein HU">
    <location>
        <begin position="1"/>
        <end position="100"/>
    </location>
</feature>
<organism>
    <name type="scientific">Chlamydia muridarum (strain MoPn / Nigg)</name>
    <dbReference type="NCBI Taxonomy" id="243161"/>
    <lineage>
        <taxon>Bacteria</taxon>
        <taxon>Pseudomonadati</taxon>
        <taxon>Chlamydiota</taxon>
        <taxon>Chlamydiia</taxon>
        <taxon>Chlamydiales</taxon>
        <taxon>Chlamydiaceae</taxon>
        <taxon>Chlamydia/Chlamydophila group</taxon>
        <taxon>Chlamydia</taxon>
    </lineage>
</organism>